<keyword id="KW-0028">Amino-acid biosynthesis</keyword>
<keyword id="KW-0408">Iron</keyword>
<keyword id="KW-0411">Iron-sulfur</keyword>
<keyword id="KW-0456">Lyase</keyword>
<keyword id="KW-0457">Lysine biosynthesis</keyword>
<keyword id="KW-0479">Metal-binding</keyword>
<keyword id="KW-0496">Mitochondrion</keyword>
<keyword id="KW-1185">Reference proteome</keyword>
<keyword id="KW-0809">Transit peptide</keyword>
<gene>
    <name type="primary">LYS4</name>
    <name type="ORF">UMAG_10689</name>
</gene>
<name>LYS4_MYCMD</name>
<evidence type="ECO:0000250" key="1"/>
<evidence type="ECO:0000255" key="2"/>
<evidence type="ECO:0000305" key="3"/>
<comment type="function">
    <text evidence="1">Catalyzes the reversible hydration of cis-homoaconitate to (2R,3S)-homoisocitrate, a step in the alpha-aminoadipate pathway for lysine biosynthesis.</text>
</comment>
<comment type="catalytic activity">
    <reaction>
        <text>(2R,3S)-homoisocitrate = cis-homoaconitate + H2O</text>
        <dbReference type="Rhea" id="RHEA:15485"/>
        <dbReference type="ChEBI" id="CHEBI:15377"/>
        <dbReference type="ChEBI" id="CHEBI:15404"/>
        <dbReference type="ChEBI" id="CHEBI:58174"/>
        <dbReference type="EC" id="4.2.1.36"/>
    </reaction>
</comment>
<comment type="cofactor">
    <cofactor evidence="1">
        <name>[4Fe-4S] cluster</name>
        <dbReference type="ChEBI" id="CHEBI:49883"/>
    </cofactor>
    <text evidence="1">Binds 1 [4Fe-4S] cluster per subunit.</text>
</comment>
<comment type="pathway">
    <text>Amino-acid biosynthesis; L-lysine biosynthesis via AAA pathway; L-alpha-aminoadipate from 2-oxoglutarate: step 3/5.</text>
</comment>
<comment type="subcellular location">
    <subcellularLocation>
        <location evidence="1">Mitochondrion</location>
    </subcellularLocation>
</comment>
<comment type="similarity">
    <text evidence="3">Belongs to the aconitase/IPM isomerase family.</text>
</comment>
<feature type="transit peptide" description="Mitochondrion" evidence="2">
    <location>
        <begin position="1"/>
        <end position="25"/>
    </location>
</feature>
<feature type="chain" id="PRO_0000247928" description="Homoaconitase, mitochondrial">
    <location>
        <begin position="26"/>
        <end position="734"/>
    </location>
</feature>
<feature type="binding site" evidence="1">
    <location>
        <position position="367"/>
    </location>
    <ligand>
        <name>[4Fe-4S] cluster</name>
        <dbReference type="ChEBI" id="CHEBI:49883"/>
    </ligand>
</feature>
<feature type="binding site" evidence="1">
    <location>
        <position position="427"/>
    </location>
    <ligand>
        <name>[4Fe-4S] cluster</name>
        <dbReference type="ChEBI" id="CHEBI:49883"/>
    </ligand>
</feature>
<feature type="binding site" evidence="1">
    <location>
        <position position="430"/>
    </location>
    <ligand>
        <name>[4Fe-4S] cluster</name>
        <dbReference type="ChEBI" id="CHEBI:49883"/>
    </ligand>
</feature>
<reference key="1">
    <citation type="journal article" date="2006" name="Nature">
        <title>Insights from the genome of the biotrophic fungal plant pathogen Ustilago maydis.</title>
        <authorList>
            <person name="Kaemper J."/>
            <person name="Kahmann R."/>
            <person name="Boelker M."/>
            <person name="Ma L.-J."/>
            <person name="Brefort T."/>
            <person name="Saville B.J."/>
            <person name="Banuett F."/>
            <person name="Kronstad J.W."/>
            <person name="Gold S.E."/>
            <person name="Mueller O."/>
            <person name="Perlin M.H."/>
            <person name="Woesten H.A.B."/>
            <person name="de Vries R."/>
            <person name="Ruiz-Herrera J."/>
            <person name="Reynaga-Pena C.G."/>
            <person name="Snetselaar K."/>
            <person name="McCann M."/>
            <person name="Perez-Martin J."/>
            <person name="Feldbruegge M."/>
            <person name="Basse C.W."/>
            <person name="Steinberg G."/>
            <person name="Ibeas J.I."/>
            <person name="Holloman W."/>
            <person name="Guzman P."/>
            <person name="Farman M.L."/>
            <person name="Stajich J.E."/>
            <person name="Sentandreu R."/>
            <person name="Gonzalez-Prieto J.M."/>
            <person name="Kennell J.C."/>
            <person name="Molina L."/>
            <person name="Schirawski J."/>
            <person name="Mendoza-Mendoza A."/>
            <person name="Greilinger D."/>
            <person name="Muench K."/>
            <person name="Roessel N."/>
            <person name="Scherer M."/>
            <person name="Vranes M."/>
            <person name="Ladendorf O."/>
            <person name="Vincon V."/>
            <person name="Fuchs U."/>
            <person name="Sandrock B."/>
            <person name="Meng S."/>
            <person name="Ho E.C.H."/>
            <person name="Cahill M.J."/>
            <person name="Boyce K.J."/>
            <person name="Klose J."/>
            <person name="Klosterman S.J."/>
            <person name="Deelstra H.J."/>
            <person name="Ortiz-Castellanos L."/>
            <person name="Li W."/>
            <person name="Sanchez-Alonso P."/>
            <person name="Schreier P.H."/>
            <person name="Haeuser-Hahn I."/>
            <person name="Vaupel M."/>
            <person name="Koopmann E."/>
            <person name="Friedrich G."/>
            <person name="Voss H."/>
            <person name="Schlueter T."/>
            <person name="Margolis J."/>
            <person name="Platt D."/>
            <person name="Swimmer C."/>
            <person name="Gnirke A."/>
            <person name="Chen F."/>
            <person name="Vysotskaia V."/>
            <person name="Mannhaupt G."/>
            <person name="Gueldener U."/>
            <person name="Muensterkoetter M."/>
            <person name="Haase D."/>
            <person name="Oesterheld M."/>
            <person name="Mewes H.-W."/>
            <person name="Mauceli E.W."/>
            <person name="DeCaprio D."/>
            <person name="Wade C.M."/>
            <person name="Butler J."/>
            <person name="Young S.K."/>
            <person name="Jaffe D.B."/>
            <person name="Calvo S.E."/>
            <person name="Nusbaum C."/>
            <person name="Galagan J.E."/>
            <person name="Birren B.W."/>
        </authorList>
    </citation>
    <scope>NUCLEOTIDE SEQUENCE [LARGE SCALE GENOMIC DNA]</scope>
    <source>
        <strain>DSM 14603 / FGSC 9021 / UM521</strain>
    </source>
</reference>
<reference key="2">
    <citation type="submission" date="2014-09" db="EMBL/GenBank/DDBJ databases">
        <authorList>
            <person name="Gueldener U."/>
            <person name="Muensterkoetter M."/>
            <person name="Walter M.C."/>
            <person name="Mannhaupt G."/>
            <person name="Kahmann R."/>
        </authorList>
    </citation>
    <scope>GENOME REANNOTATION</scope>
    <source>
        <strain>DSM 14603 / FGSC 9021 / UM521</strain>
    </source>
</reference>
<dbReference type="EC" id="4.2.1.36"/>
<dbReference type="EMBL" id="CM003156">
    <property type="protein sequence ID" value="KIS66728.1"/>
    <property type="molecule type" value="Genomic_DNA"/>
</dbReference>
<dbReference type="RefSeq" id="XP_011391741.1">
    <property type="nucleotide sequence ID" value="XM_011393439.1"/>
</dbReference>
<dbReference type="SMR" id="Q4P521"/>
<dbReference type="FunCoup" id="Q4P521">
    <property type="interactions" value="86"/>
</dbReference>
<dbReference type="STRING" id="237631.Q4P521"/>
<dbReference type="EnsemblFungi" id="KIS66728">
    <property type="protein sequence ID" value="KIS66728"/>
    <property type="gene ID" value="UMAG_10689"/>
</dbReference>
<dbReference type="GeneID" id="23566684"/>
<dbReference type="KEGG" id="uma:UMAG_10689"/>
<dbReference type="VEuPathDB" id="FungiDB:UMAG_10689"/>
<dbReference type="eggNOG" id="KOG0453">
    <property type="taxonomic scope" value="Eukaryota"/>
</dbReference>
<dbReference type="HOGENOM" id="CLU_006714_3_1_1"/>
<dbReference type="InParanoid" id="Q4P521"/>
<dbReference type="OrthoDB" id="10262323at2759"/>
<dbReference type="UniPathway" id="UPA00033">
    <property type="reaction ID" value="UER01027"/>
</dbReference>
<dbReference type="Proteomes" id="UP000000561">
    <property type="component" value="Chromosome 17"/>
</dbReference>
<dbReference type="GO" id="GO:0005759">
    <property type="term" value="C:mitochondrial matrix"/>
    <property type="evidence" value="ECO:0007669"/>
    <property type="project" value="EnsemblFungi"/>
</dbReference>
<dbReference type="GO" id="GO:0051539">
    <property type="term" value="F:4 iron, 4 sulfur cluster binding"/>
    <property type="evidence" value="ECO:0007669"/>
    <property type="project" value="InterPro"/>
</dbReference>
<dbReference type="GO" id="GO:0004409">
    <property type="term" value="F:homoaconitate hydratase activity"/>
    <property type="evidence" value="ECO:0007669"/>
    <property type="project" value="UniProtKB-EC"/>
</dbReference>
<dbReference type="GO" id="GO:0046872">
    <property type="term" value="F:metal ion binding"/>
    <property type="evidence" value="ECO:0007669"/>
    <property type="project" value="UniProtKB-KW"/>
</dbReference>
<dbReference type="GO" id="GO:0019878">
    <property type="term" value="P:lysine biosynthetic process via aminoadipic acid"/>
    <property type="evidence" value="ECO:0007669"/>
    <property type="project" value="UniProtKB-UniPathway"/>
</dbReference>
<dbReference type="CDD" id="cd01582">
    <property type="entry name" value="Homoaconitase"/>
    <property type="match status" value="1"/>
</dbReference>
<dbReference type="CDD" id="cd01674">
    <property type="entry name" value="Homoaconitase_Swivel"/>
    <property type="match status" value="1"/>
</dbReference>
<dbReference type="Gene3D" id="3.30.499.10">
    <property type="entry name" value="Aconitase, domain 3"/>
    <property type="match status" value="2"/>
</dbReference>
<dbReference type="Gene3D" id="3.20.19.10">
    <property type="entry name" value="Aconitase, domain 4"/>
    <property type="match status" value="1"/>
</dbReference>
<dbReference type="InterPro" id="IPR015931">
    <property type="entry name" value="Acnase/IPM_dHydase_lsu_aba_1/3"/>
</dbReference>
<dbReference type="InterPro" id="IPR001030">
    <property type="entry name" value="Acoase/IPM_deHydtase_lsu_aba"/>
</dbReference>
<dbReference type="InterPro" id="IPR015928">
    <property type="entry name" value="Aconitase/3IPM_dehydase_swvl"/>
</dbReference>
<dbReference type="InterPro" id="IPR018136">
    <property type="entry name" value="Aconitase_4Fe-4S_BS"/>
</dbReference>
<dbReference type="InterPro" id="IPR036008">
    <property type="entry name" value="Aconitase_4Fe-4S_dom"/>
</dbReference>
<dbReference type="InterPro" id="IPR000573">
    <property type="entry name" value="AconitaseA/IPMdHydase_ssu_swvl"/>
</dbReference>
<dbReference type="InterPro" id="IPR004418">
    <property type="entry name" value="Homoaconitase_mito"/>
</dbReference>
<dbReference type="InterPro" id="IPR039386">
    <property type="entry name" value="Homoaconitase_swivel"/>
</dbReference>
<dbReference type="InterPro" id="IPR050067">
    <property type="entry name" value="IPM_dehydratase_rel_enz"/>
</dbReference>
<dbReference type="NCBIfam" id="TIGR00139">
    <property type="entry name" value="h_aconitase"/>
    <property type="match status" value="1"/>
</dbReference>
<dbReference type="PANTHER" id="PTHR43822:SF2">
    <property type="entry name" value="HOMOACONITASE, MITOCHONDRIAL"/>
    <property type="match status" value="1"/>
</dbReference>
<dbReference type="PANTHER" id="PTHR43822">
    <property type="entry name" value="HOMOACONITASE, MITOCHONDRIAL-RELATED"/>
    <property type="match status" value="1"/>
</dbReference>
<dbReference type="Pfam" id="PF00330">
    <property type="entry name" value="Aconitase"/>
    <property type="match status" value="1"/>
</dbReference>
<dbReference type="Pfam" id="PF00694">
    <property type="entry name" value="Aconitase_C"/>
    <property type="match status" value="1"/>
</dbReference>
<dbReference type="PRINTS" id="PR00415">
    <property type="entry name" value="ACONITASE"/>
</dbReference>
<dbReference type="SUPFAM" id="SSF53732">
    <property type="entry name" value="Aconitase iron-sulfur domain"/>
    <property type="match status" value="1"/>
</dbReference>
<dbReference type="SUPFAM" id="SSF52016">
    <property type="entry name" value="LeuD/IlvD-like"/>
    <property type="match status" value="1"/>
</dbReference>
<dbReference type="PROSITE" id="PS01244">
    <property type="entry name" value="ACONITASE_2"/>
    <property type="match status" value="1"/>
</dbReference>
<proteinExistence type="inferred from homology"/>
<accession>Q4P521</accession>
<accession>A0A0D1CID6</accession>
<organism>
    <name type="scientific">Mycosarcoma maydis</name>
    <name type="common">Corn smut fungus</name>
    <name type="synonym">Ustilago maydis</name>
    <dbReference type="NCBI Taxonomy" id="5270"/>
    <lineage>
        <taxon>Eukaryota</taxon>
        <taxon>Fungi</taxon>
        <taxon>Dikarya</taxon>
        <taxon>Basidiomycota</taxon>
        <taxon>Ustilaginomycotina</taxon>
        <taxon>Ustilaginomycetes</taxon>
        <taxon>Ustilaginales</taxon>
        <taxon>Ustilaginaceae</taxon>
        <taxon>Mycosarcoma</taxon>
    </lineage>
</organism>
<protein>
    <recommendedName>
        <fullName>Homoaconitase, mitochondrial</fullName>
        <ecNumber>4.2.1.36</ecNumber>
    </recommendedName>
    <alternativeName>
        <fullName>Homoaconitate hydratase</fullName>
    </alternativeName>
</protein>
<sequence length="734" mass="77591">MGASNLLRFGAVTRISTPLLSRRSLATHAAVNPASGTYNLVEKIVQKYAVDLSPGSHVKSGDYVSIRPGTVMTHDNTGPVISKFGSIGATSIYNPDQVVFALDHDVQNKSAKNLEKYSKIESFARKHGIDFYPAGRGIGHQVLVEEGYAFPQTLAVASDSHSNMYGGVGCLGTPIVRTDAAAIWATGQTWWQIPEVVKVELKGELPKGVTGKDVIVALCGYFNKDQVLNAAIEFHGSGLSSLSVEERLAIANMTTEWGALAGLFPTDDVTLSWYEKQIRKRDKLEFQIGSSPSPSNSHPRLNMNRLDELSRTLLRPDSGAVYSKHLTLDLATLVPHVSGPNSVKVSTPLDELTSQNIAINKAYLVSCVNSRASDLKAAADVIRGKKVAPGVEFYVAAASSVVQREAEEAGDWGALMAAGAKPLPAGCGPCIGLGVGLLEDGEVGISATNRNYKGRMGSPNAQAYLASPAVVAASAIEGKICGPSDLDVSLLPPSKGLKYSISTAANAAPADASSTDASAGGVEILDSFPTAFSGPLIFAPQDNLNTDGIYPGKYTYQDDITPEKQAEVVMENYDASFASTVAGLRASSSSSSSTKQGPILIGGYNFGTGSSREQAATALKYAGIPLVLAGSFGDIFQRNAINNGLICLESHQLVQDLTRLYLENEGGVRNSKAILLDESKVHIDSSTGSINLSFKGPDGAKIERTYTAKPAGIGRSVQEIYTAGGLEKWVKQRI</sequence>